<dbReference type="EMBL" id="AY576998">
    <property type="protein sequence ID" value="AAS92636.1"/>
    <property type="molecule type" value="mRNA"/>
</dbReference>
<dbReference type="RefSeq" id="NP_999967.1">
    <property type="nucleotide sequence ID" value="NM_214802.1"/>
</dbReference>
<dbReference type="FunCoup" id="Q6PUR7">
    <property type="interactions" value="184"/>
</dbReference>
<dbReference type="STRING" id="7955.ENSDARP00000005452"/>
<dbReference type="PaxDb" id="7955-ENSDARP00000005452"/>
<dbReference type="GeneID" id="407723"/>
<dbReference type="KEGG" id="dre:407723"/>
<dbReference type="AGR" id="ZFIN:ZDB-GENE-061122-1"/>
<dbReference type="CTD" id="407723"/>
<dbReference type="ZFIN" id="ZDB-GENE-061122-1">
    <property type="gene designation" value="smcr8b"/>
</dbReference>
<dbReference type="eggNOG" id="ENOG502QSW2">
    <property type="taxonomic scope" value="Eukaryota"/>
</dbReference>
<dbReference type="InParanoid" id="Q6PUR7"/>
<dbReference type="OrthoDB" id="2289278at2759"/>
<dbReference type="PhylomeDB" id="Q6PUR7"/>
<dbReference type="PRO" id="PR:Q6PUR7"/>
<dbReference type="Proteomes" id="UP000000437">
    <property type="component" value="Alternate scaffold 1"/>
</dbReference>
<dbReference type="Proteomes" id="UP000000437">
    <property type="component" value="Chromosome 1"/>
</dbReference>
<dbReference type="GO" id="GO:0005737">
    <property type="term" value="C:cytoplasm"/>
    <property type="evidence" value="ECO:0000250"/>
    <property type="project" value="UniProtKB"/>
</dbReference>
<dbReference type="GO" id="GO:0032045">
    <property type="term" value="C:guanyl-nucleotide exchange factor complex"/>
    <property type="evidence" value="ECO:0000318"/>
    <property type="project" value="GO_Central"/>
</dbReference>
<dbReference type="GO" id="GO:0005634">
    <property type="term" value="C:nucleus"/>
    <property type="evidence" value="ECO:0007669"/>
    <property type="project" value="UniProtKB-SubCell"/>
</dbReference>
<dbReference type="GO" id="GO:0005096">
    <property type="term" value="F:GTPase activator activity"/>
    <property type="evidence" value="ECO:0007669"/>
    <property type="project" value="InterPro"/>
</dbReference>
<dbReference type="GO" id="GO:0005085">
    <property type="term" value="F:guanyl-nucleotide exchange factor activity"/>
    <property type="evidence" value="ECO:0007669"/>
    <property type="project" value="UniProtKB-KW"/>
</dbReference>
<dbReference type="GO" id="GO:0004860">
    <property type="term" value="F:protein kinase inhibitor activity"/>
    <property type="evidence" value="ECO:0000250"/>
    <property type="project" value="UniProtKB"/>
</dbReference>
<dbReference type="GO" id="GO:0006914">
    <property type="term" value="P:autophagy"/>
    <property type="evidence" value="ECO:0007669"/>
    <property type="project" value="UniProtKB-KW"/>
</dbReference>
<dbReference type="GO" id="GO:1902902">
    <property type="term" value="P:negative regulation of autophagosome assembly"/>
    <property type="evidence" value="ECO:0000250"/>
    <property type="project" value="UniProtKB"/>
</dbReference>
<dbReference type="GO" id="GO:0010629">
    <property type="term" value="P:negative regulation of gene expression"/>
    <property type="evidence" value="ECO:0000250"/>
    <property type="project" value="UniProtKB"/>
</dbReference>
<dbReference type="GO" id="GO:0016242">
    <property type="term" value="P:negative regulation of macroautophagy"/>
    <property type="evidence" value="ECO:0000250"/>
    <property type="project" value="UniProtKB"/>
</dbReference>
<dbReference type="GO" id="GO:1901098">
    <property type="term" value="P:positive regulation of autophagosome maturation"/>
    <property type="evidence" value="ECO:0000250"/>
    <property type="project" value="UniProtKB"/>
</dbReference>
<dbReference type="GO" id="GO:0032008">
    <property type="term" value="P:positive regulation of TOR signaling"/>
    <property type="evidence" value="ECO:0000250"/>
    <property type="project" value="UniProtKB"/>
</dbReference>
<dbReference type="GO" id="GO:0010506">
    <property type="term" value="P:regulation of autophagy"/>
    <property type="evidence" value="ECO:0000250"/>
    <property type="project" value="UniProtKB"/>
</dbReference>
<dbReference type="GO" id="GO:1903432">
    <property type="term" value="P:regulation of TORC1 signaling"/>
    <property type="evidence" value="ECO:0000250"/>
    <property type="project" value="UniProtKB"/>
</dbReference>
<dbReference type="InterPro" id="IPR037521">
    <property type="entry name" value="FLCN/SMCR8_DENN"/>
</dbReference>
<dbReference type="InterPro" id="IPR037520">
    <property type="entry name" value="Folliculin/SMCR8_longin"/>
</dbReference>
<dbReference type="PANTHER" id="PTHR31334:SF1">
    <property type="entry name" value="GUANINE NUCLEOTIDE EXCHANGE PROTEIN SMCR8"/>
    <property type="match status" value="1"/>
</dbReference>
<dbReference type="PANTHER" id="PTHR31334">
    <property type="entry name" value="SMITH-MAGENIS SYNDROME REGION GENE 8 PROTEIN"/>
    <property type="match status" value="1"/>
</dbReference>
<dbReference type="Pfam" id="PF11704">
    <property type="entry name" value="Folliculin"/>
    <property type="match status" value="1"/>
</dbReference>
<dbReference type="PROSITE" id="PS51834">
    <property type="entry name" value="DENN_FLCN_SMCR8"/>
    <property type="match status" value="1"/>
</dbReference>
<keyword id="KW-0072">Autophagy</keyword>
<keyword id="KW-0963">Cytoplasm</keyword>
<keyword id="KW-0344">Guanine-nucleotide releasing factor</keyword>
<keyword id="KW-0539">Nucleus</keyword>
<keyword id="KW-1185">Reference proteome</keyword>
<protein>
    <recommendedName>
        <fullName>Guanine nucleotide exchange protein smcr8b</fullName>
    </recommendedName>
    <alternativeName>
        <fullName>Smith-Magenis syndrome chromosomal region candidate gene 8 protein homolog B</fullName>
    </alternativeName>
</protein>
<organism>
    <name type="scientific">Danio rerio</name>
    <name type="common">Zebrafish</name>
    <name type="synonym">Brachydanio rerio</name>
    <dbReference type="NCBI Taxonomy" id="7955"/>
    <lineage>
        <taxon>Eukaryota</taxon>
        <taxon>Metazoa</taxon>
        <taxon>Chordata</taxon>
        <taxon>Craniata</taxon>
        <taxon>Vertebrata</taxon>
        <taxon>Euteleostomi</taxon>
        <taxon>Actinopterygii</taxon>
        <taxon>Neopterygii</taxon>
        <taxon>Teleostei</taxon>
        <taxon>Ostariophysi</taxon>
        <taxon>Cypriniformes</taxon>
        <taxon>Danionidae</taxon>
        <taxon>Danioninae</taxon>
        <taxon>Danio</taxon>
    </lineage>
</organism>
<feature type="chain" id="PRO_0000287471" description="Guanine nucleotide exchange protein smcr8b">
    <location>
        <begin position="1"/>
        <end position="985"/>
    </location>
</feature>
<feature type="domain" description="uDENN FLCN/SMCR8-type" evidence="2">
    <location>
        <begin position="47"/>
        <end position="225"/>
    </location>
</feature>
<feature type="domain" description="cDENN FLCN/SMCR8-type" evidence="2">
    <location>
        <begin position="390"/>
        <end position="895"/>
    </location>
</feature>
<feature type="domain" description="dDENN FLCN/SMCR8-type" evidence="2">
    <location>
        <begin position="904"/>
        <end position="962"/>
    </location>
</feature>
<feature type="region of interest" description="Disordered" evidence="3">
    <location>
        <begin position="242"/>
        <end position="301"/>
    </location>
</feature>
<feature type="region of interest" description="Disordered" evidence="3">
    <location>
        <begin position="502"/>
        <end position="528"/>
    </location>
</feature>
<feature type="region of interest" description="Disordered" evidence="3">
    <location>
        <begin position="639"/>
        <end position="659"/>
    </location>
</feature>
<feature type="compositionally biased region" description="Basic and acidic residues" evidence="3">
    <location>
        <begin position="242"/>
        <end position="292"/>
    </location>
</feature>
<feature type="compositionally biased region" description="Polar residues" evidence="3">
    <location>
        <begin position="502"/>
        <end position="514"/>
    </location>
</feature>
<accession>Q6PUR7</accession>
<reference key="1">
    <citation type="journal article" date="2004" name="Proc. Natl. Acad. Sci. U.S.A.">
        <title>Hematopoietic gene expression profile in zebrafish kidney marrow.</title>
        <authorList>
            <person name="Song H.-D."/>
            <person name="Sun X.-J."/>
            <person name="Deng M."/>
            <person name="Zhang G.-W."/>
            <person name="Zhou Y."/>
            <person name="Wu X.-Y."/>
            <person name="Sheng Y."/>
            <person name="Chen Y."/>
            <person name="Ruan Z."/>
            <person name="Jiang C.-L."/>
            <person name="Fan H.-Y."/>
            <person name="Zon L.I."/>
            <person name="Kanki J.P."/>
            <person name="Liu T.X."/>
            <person name="Look A.T."/>
            <person name="Chen Z."/>
        </authorList>
    </citation>
    <scope>NUCLEOTIDE SEQUENCE [LARGE SCALE MRNA]</scope>
    <source>
        <tissue>Kidney marrow</tissue>
    </source>
</reference>
<gene>
    <name type="primary">smcr8b</name>
    <name type="synonym">smcr8</name>
</gene>
<proteinExistence type="evidence at transcript level"/>
<evidence type="ECO:0000250" key="1">
    <source>
        <dbReference type="UniProtKB" id="Q8TEV9"/>
    </source>
</evidence>
<evidence type="ECO:0000255" key="2">
    <source>
        <dbReference type="PROSITE-ProRule" id="PRU01178"/>
    </source>
</evidence>
<evidence type="ECO:0000256" key="3">
    <source>
        <dbReference type="SAM" id="MobiDB-lite"/>
    </source>
</evidence>
<evidence type="ECO:0000305" key="4"/>
<name>SMR8B_DANRE</name>
<comment type="function">
    <text evidence="1">Component of the C9orf72-SMCR8 complex, a complex that has guanine nucleotide exchange factor (GEF) activity and regulates autophagy. In the complex, C9orf72 and SMCR8 probably constitute the catalytic subunits that promote the exchange of GDP to GTP, converting inactive GDP-bound RAB8A and RAB39B into their active GTP-bound form, thereby promoting autophagosome maturation. The C9orf72-SMCR8 complex also acts as a negative regulator of autophagy initiation by interacting with the ATG1/ULK1 kinase complex and inhibiting its protein kinase activity.</text>
</comment>
<comment type="subunit">
    <text evidence="1">Component of the C9orf72-SMCR8 complex. The C9orf72-SMCR8 complex associates with the ATG1/ULK1 kinase complex.</text>
</comment>
<comment type="subcellular location">
    <subcellularLocation>
        <location evidence="1">Cytoplasm</location>
    </subcellularLocation>
    <subcellularLocation>
        <location evidence="1">Nucleus</location>
    </subcellularLocation>
    <text evidence="1">Localizes mainly in the cytoplasm.</text>
</comment>
<comment type="similarity">
    <text evidence="4">Belongs to the SMCR8 family.</text>
</comment>
<sequence length="985" mass="110604">MIGSPDLVAFTKETDFSEITTDSSVLPEDLSVPMYPYTGDATPWSKISSAKLKKDFILISEFSEQVGPQPLLTVPLETKACGTFDLNYFSLRIMSVDYQTSLAGSPGYGSFKLNFVEDSKVVLADSREGVFAYVHHLTLYDLEARGFVRPLCLAYVSSDENKIIQQFQRISTEFNKVSECLKTGNRKNFANELEVKLRDLEYTRVVLQKELNTVSVKCSSEREPILNGVHSFERNADEVKLNEKSSHTDEISPQEKDGCGNSRKVEVKLENENRSHFEHEQYGKQRKDKPDKTSCPMPLANKNDELASVEKLIQDYKSLLKQVTCYPTRKLRDSEYSPYEPDDLPQSFDLDLDSQFAGPMLECSVFTYTNTPSQTLQQINSTSSSRFDKRLKTLEELCDDYFYQQALQQLYSIERTFRGDACYLYTQQLCRNLLRNLKSTNFLFEDPCDLDDDVGLQIGQSTIQQPSFLPAPSFLSGPVSLESYASCVEMVPIKLELGGSSQSQVQHSTLNTPSKDNRPQVADKSPAEVEMKGEIISAPDCQGNVESVSNLMKTSISSGDSIEVLGTERSFRSQGANTLVETAMHRPPPLSSATALEGLKQGRVPTRRTCSEDSIEVLCITESISPDELRASYPCAIDEESPEQETDEKNSSQYQEDNNEKSIYVQGKISADHENACLKKLHPSVTVTPPDCPLTLEETSFQDSCQATESATMLLLDEPSRMVPDDLSDCFSYRSTTASTTSECTFPACLPKDKREGGTRRRRGRVGRAALQFMRQFPFAVHAVFSLLSGRTLVVLGSEEAAVRRLVTALSVYLPHLTKYKDSIQPWTSTPLQLTDLLNWKLIGFDRMCSFNPSSLPHCLDHYSRYLSILDVDQKTLHCPTYSGSLINLLVEPKSHFKRGNTYFTFAQSVQSKLVTKAFLLTFSHGHPSPSRPQGSSGTECFLSELHTDDKKILRYLSELIKLHFMEVTPNVLLFSYTTTSIFKL</sequence>